<comment type="function">
    <text evidence="1 2 4">Oxidoreductase; part of the gene cluster that mediates the biosynthesis of aculins (PubMed:26374386). The pathway begins with the synthesis of 6-methylsalicylic acid by the polyketide synthase (PKS) acuA via condensation of acetate and malonate units (PubMed:26374386). The 6-methylsalicylic acid decarboxylase acuB then catalyzes the decarboxylation of 6-methylsalicylic acid to yield m-cresol (also known as 3-methylphenol) (Probable). These first reactions occur in the cytosol (By similarity). The intermediate m-cresol is then transported into the endoplasmic reticulum where the cytochrome P450 monooxygenase acuC converts it to m-hydroxybenzyl alcohol, which is further converted to gentisyl alcohol by the cytochrome P450 monooxygenase acuD (Probable). Gentisyl alcohol is further oxidized by the oxidoreductase acuE that probably catalyzes hydroxylation of the aromatic ring (Probable). The aromatic system might then be opened by oxidation through a Baeyer-Villiger type of oxidation, which could be catalyzed by acuF, with the carboxylic acid at C-1 subsequently reduced to an aldehyde by acuG (Probable). Subsequently, a hemiacetal is formed, before the dehydrogenase acuH would reduce the double bond between C-4 and C-6 (Probable). Finally, keto-enol tautomerism results in formation of aculinic acid, which exists as two diastereomers (both R/S configurations at C-1) by non-enzymatic hemiacetal formation (Probable). The carboxypeptidase acuI could be involved in the linking of aculinic acid to an aculene A moiety produced by the aculene biosynthesis cluster and which leads to the production of aculin A (Probable). AcuI may also be involved in the attachment of proline to aculinic acid to form epi-aculins A and B (Probable).</text>
</comment>
<comment type="pathway">
    <text evidence="4">Secondary metabolite biosynthesis.</text>
</comment>
<protein>
    <recommendedName>
        <fullName evidence="3">Oxidoreductase acuF</fullName>
        <ecNumber evidence="4">1.-.-.-</ecNumber>
    </recommendedName>
    <alternativeName>
        <fullName evidence="3">Aculin biosynthesis cluster protein F</fullName>
    </alternativeName>
</protein>
<feature type="chain" id="PRO_0000450421" description="Oxidoreductase acuF">
    <location>
        <begin position="1"/>
        <end position="433"/>
    </location>
</feature>
<evidence type="ECO:0000250" key="1">
    <source>
        <dbReference type="UniProtKB" id="A0A075TRC0"/>
    </source>
</evidence>
<evidence type="ECO:0000269" key="2">
    <source>
    </source>
</evidence>
<evidence type="ECO:0000303" key="3">
    <source>
    </source>
</evidence>
<evidence type="ECO:0000305" key="4">
    <source>
    </source>
</evidence>
<accession>P9WF00</accession>
<name>ACUF_ASPA1</name>
<sequence length="433" mass="49108">MERAISTTPILDQALTCVQSYKALAATVQELASPELQRSIEEGLAQFLTHMPEFNILVNAVEPPHTSWDYLLRNDASQRGEMTMLLMELQCEIDQMAFAIRQAMQQQHPEAEPLSNNSRLVDAWTENLRSVEDHTVWRLAFWRRDHAVHTTYPTTNPLVNQSFYFAIRNELGLDVSTQFRECIRRAITQECPTITARPALHRRLVDLVVQRRRFWNFQRRIRGLSKDAVLWGRDALAPPHFAPGDERFTCPFCFFDLPVAAYRTPRAWTDHVMSDLEGYVCLYETCSSTRSWPETCPHACTSFGAWFTAMAGSFAEGVEWCSHAFACDGRRLEEVHRPRCAAPAVRLDSVCPLCGREPAVEETELRMADAADPLQDDDQNRAKARLLLSHIAGHLEVITPMAFTWNTDRNALDPDRRLFWGDIGSPGGAGGSA</sequence>
<keyword id="KW-0560">Oxidoreductase</keyword>
<keyword id="KW-1185">Reference proteome</keyword>
<organism>
    <name type="scientific">Aspergillus aculeatus (strain ATCC 16872 / CBS 172.66 / WB 5094)</name>
    <dbReference type="NCBI Taxonomy" id="690307"/>
    <lineage>
        <taxon>Eukaryota</taxon>
        <taxon>Fungi</taxon>
        <taxon>Dikarya</taxon>
        <taxon>Ascomycota</taxon>
        <taxon>Pezizomycotina</taxon>
        <taxon>Eurotiomycetes</taxon>
        <taxon>Eurotiomycetidae</taxon>
        <taxon>Eurotiales</taxon>
        <taxon>Aspergillaceae</taxon>
        <taxon>Aspergillus</taxon>
        <taxon>Aspergillus subgen. Circumdati</taxon>
    </lineage>
</organism>
<dbReference type="EC" id="1.-.-.-" evidence="4"/>
<dbReference type="EMBL" id="KV878982">
    <property type="status" value="NOT_ANNOTATED_CDS"/>
    <property type="molecule type" value="Genomic_DNA"/>
</dbReference>
<dbReference type="Proteomes" id="UP000184546">
    <property type="component" value="Unassembled WGS sequence"/>
</dbReference>
<dbReference type="GO" id="GO:0016491">
    <property type="term" value="F:oxidoreductase activity"/>
    <property type="evidence" value="ECO:0007669"/>
    <property type="project" value="UniProtKB-KW"/>
</dbReference>
<proteinExistence type="inferred from homology"/>
<reference key="1">
    <citation type="journal article" date="2017" name="Genome Biol.">
        <title>Comparative genomics reveals high biological diversity and specific adaptations in the industrially and medically important fungal genus Aspergillus.</title>
        <authorList>
            <person name="de Vries R.P."/>
            <person name="Riley R."/>
            <person name="Wiebenga A."/>
            <person name="Aguilar-Osorio G."/>
            <person name="Amillis S."/>
            <person name="Uchima C.A."/>
            <person name="Anderluh G."/>
            <person name="Asadollahi M."/>
            <person name="Askin M."/>
            <person name="Barry K."/>
            <person name="Battaglia E."/>
            <person name="Bayram O."/>
            <person name="Benocci T."/>
            <person name="Braus-Stromeyer S.A."/>
            <person name="Caldana C."/>
            <person name="Canovas D."/>
            <person name="Cerqueira G.C."/>
            <person name="Chen F."/>
            <person name="Chen W."/>
            <person name="Choi C."/>
            <person name="Clum A."/>
            <person name="Dos Santos R.A."/>
            <person name="Damasio A.R."/>
            <person name="Diallinas G."/>
            <person name="Emri T."/>
            <person name="Fekete E."/>
            <person name="Flipphi M."/>
            <person name="Freyberg S."/>
            <person name="Gallo A."/>
            <person name="Gournas C."/>
            <person name="Habgood R."/>
            <person name="Hainaut M."/>
            <person name="Harispe M.L."/>
            <person name="Henrissat B."/>
            <person name="Hilden K.S."/>
            <person name="Hope R."/>
            <person name="Hossain A."/>
            <person name="Karabika E."/>
            <person name="Karaffa L."/>
            <person name="Karanyi Z."/>
            <person name="Krasevec N."/>
            <person name="Kuo A."/>
            <person name="Kusch H."/>
            <person name="LaButti K."/>
            <person name="Lagendijk E.L."/>
            <person name="Lapidus A."/>
            <person name="Levasseur A."/>
            <person name="Lindquist E."/>
            <person name="Lipzen A."/>
            <person name="Logrieco A.F."/>
            <person name="MacCabe A."/>
            <person name="Maekelae M.R."/>
            <person name="Malavazi I."/>
            <person name="Melin P."/>
            <person name="Meyer V."/>
            <person name="Mielnichuk N."/>
            <person name="Miskei M."/>
            <person name="Molnar A.P."/>
            <person name="Mule G."/>
            <person name="Ngan C.Y."/>
            <person name="Orejas M."/>
            <person name="Orosz E."/>
            <person name="Ouedraogo J.P."/>
            <person name="Overkamp K.M."/>
            <person name="Park H.-S."/>
            <person name="Perrone G."/>
            <person name="Piumi F."/>
            <person name="Punt P.J."/>
            <person name="Ram A.F."/>
            <person name="Ramon A."/>
            <person name="Rauscher S."/>
            <person name="Record E."/>
            <person name="Riano-Pachon D.M."/>
            <person name="Robert V."/>
            <person name="Roehrig J."/>
            <person name="Ruller R."/>
            <person name="Salamov A."/>
            <person name="Salih N.S."/>
            <person name="Samson R.A."/>
            <person name="Sandor E."/>
            <person name="Sanguinetti M."/>
            <person name="Schuetze T."/>
            <person name="Sepcic K."/>
            <person name="Shelest E."/>
            <person name="Sherlock G."/>
            <person name="Sophianopoulou V."/>
            <person name="Squina F.M."/>
            <person name="Sun H."/>
            <person name="Susca A."/>
            <person name="Todd R.B."/>
            <person name="Tsang A."/>
            <person name="Unkles S.E."/>
            <person name="van de Wiele N."/>
            <person name="van Rossen-Uffink D."/>
            <person name="Oliveira J.V."/>
            <person name="Vesth T.C."/>
            <person name="Visser J."/>
            <person name="Yu J.-H."/>
            <person name="Zhou M."/>
            <person name="Andersen M.R."/>
            <person name="Archer D.B."/>
            <person name="Baker S.E."/>
            <person name="Benoit I."/>
            <person name="Brakhage A.A."/>
            <person name="Braus G.H."/>
            <person name="Fischer R."/>
            <person name="Frisvad J.C."/>
            <person name="Goldman G.H."/>
            <person name="Houbraken J."/>
            <person name="Oakley B."/>
            <person name="Pocsi I."/>
            <person name="Scazzocchio C."/>
            <person name="Seiboth B."/>
            <person name="vanKuyk P.A."/>
            <person name="Wortman J."/>
            <person name="Dyer P.S."/>
            <person name="Grigoriev I.V."/>
        </authorList>
    </citation>
    <scope>NUCLEOTIDE SEQUENCE [LARGE SCALE GENOMIC DNA]</scope>
    <source>
        <strain>ATCC 16872 / CBS 172.66 / WB 5094</strain>
    </source>
</reference>
<reference key="2">
    <citation type="journal article" date="2015" name="ChemBioChem">
        <title>Investigation of a 6-MSA Synthase Gene Cluster in Aspergillus aculeatus Reveals 6-MSA-derived Aculinic Acid, Aculins A-B and Epi-Aculin A.</title>
        <authorList>
            <person name="Petersen L.M."/>
            <person name="Holm D.K."/>
            <person name="Gotfredsen C.H."/>
            <person name="Mortensen U.H."/>
            <person name="Larsen T.O."/>
        </authorList>
    </citation>
    <scope>FUNCTION</scope>
    <scope>PATHWAY</scope>
</reference>
<gene>
    <name evidence="3" type="primary">acuF</name>
</gene>